<name>CEP63_RAT</name>
<reference key="1">
    <citation type="submission" date="2005-09" db="EMBL/GenBank/DDBJ databases">
        <authorList>
            <person name="Mural R.J."/>
            <person name="Adams M.D."/>
            <person name="Myers E.W."/>
            <person name="Smith H.O."/>
            <person name="Venter J.C."/>
        </authorList>
    </citation>
    <scope>NUCLEOTIDE SEQUENCE [LARGE SCALE GENOMIC DNA]</scope>
    <source>
        <strain>Brown Norway</strain>
    </source>
</reference>
<reference key="2">
    <citation type="journal article" date="2004" name="Genome Res.">
        <title>The status, quality, and expansion of the NIH full-length cDNA project: the Mammalian Gene Collection (MGC).</title>
        <authorList>
            <consortium name="The MGC Project Team"/>
        </authorList>
    </citation>
    <scope>NUCLEOTIDE SEQUENCE [LARGE SCALE MRNA]</scope>
    <source>
        <tissue>Heart</tissue>
        <tissue>Kidney</tissue>
    </source>
</reference>
<protein>
    <recommendedName>
        <fullName evidence="4">Centrosomal protein of 63 kDa</fullName>
        <shortName>Cep63</shortName>
    </recommendedName>
</protein>
<keyword id="KW-0007">Acetylation</keyword>
<keyword id="KW-0131">Cell cycle</keyword>
<keyword id="KW-0132">Cell division</keyword>
<keyword id="KW-0175">Coiled coil</keyword>
<keyword id="KW-0963">Cytoplasm</keyword>
<keyword id="KW-0206">Cytoskeleton</keyword>
<keyword id="KW-0227">DNA damage</keyword>
<keyword id="KW-0498">Mitosis</keyword>
<keyword id="KW-1185">Reference proteome</keyword>
<keyword id="KW-0832">Ubl conjugation</keyword>
<accession>Q4KLY0</accession>
<gene>
    <name evidence="5" type="primary">Cep63</name>
</gene>
<feature type="chain" id="PRO_0000381806" description="Centrosomal protein of 63 kDa">
    <location>
        <begin position="1"/>
        <end position="538"/>
    </location>
</feature>
<feature type="coiled-coil region" evidence="3">
    <location>
        <begin position="73"/>
        <end position="283"/>
    </location>
</feature>
<feature type="coiled-coil region" evidence="3">
    <location>
        <begin position="343"/>
        <end position="486"/>
    </location>
</feature>
<feature type="modified residue" description="N-acetylmethionine" evidence="2">
    <location>
        <position position="1"/>
    </location>
</feature>
<comment type="function">
    <text evidence="2">Required for normal spindle assembly. Plays a key role in mother-centriole-dependent centriole duplication; the function seems also to involve CEP152, CDK5RAP2 and WDR62 through a stepwise assembled complex at the centrosome that recruits CDK2 required for centriole duplication. Reported to be required for centrosomal recruitment of CEP152; however, this function has been questioned. Also recruits CDK1 to centrosomes. Plays a role in DNA damage response. Following DNA damage, such as double-strand breaks (DSBs), is removed from centrosomes; this leads to the inactivation of spindle assembly and delay in mitotic progression. Promotes stabilization of FXR1 protein by inhibiting FXR1 ubiquitination.</text>
</comment>
<comment type="subunit">
    <text evidence="2">Interacts with CEP152 and CDK1; these interactions recruit both ligands to centrosomes. Interacts with CDK2, CDK5RAP2, WDR62, CEP90, KIAA0753/moonraker and CCDC14. CEP63, CDK5RAP2, CEP152, WDR62 are proposed to form a stepwise assembled complex at the centrosome forming a ring near parental centrioles. Interacts with CCDC57; the interaction is required for their location to proximal end of centrioles. Interacts with FXR1; promoting its stabilization.</text>
</comment>
<comment type="subcellular location">
    <subcellularLocation>
        <location evidence="1 2">Cytoplasm</location>
        <location evidence="1 2">Cytoskeleton</location>
        <location evidence="1 2">Microtubule organizing center</location>
        <location evidence="1 2">Centrosome</location>
    </subcellularLocation>
    <subcellularLocation>
        <location evidence="1 2">Cytoplasm</location>
        <location evidence="1 2">Cytoskeleton</location>
        <location evidence="1 2">Microtubule organizing center</location>
        <location evidence="1 2">Centrosome</location>
        <location evidence="1 2">Centriole</location>
    </subcellularLocation>
    <subcellularLocation>
        <location evidence="2">Cytoplasm</location>
        <location evidence="2">Cytoskeleton</location>
        <location evidence="2">Microtubule organizing center</location>
        <location evidence="2">Centrosome</location>
        <location evidence="2">Centriolar satellite</location>
    </subcellularLocation>
    <text evidence="1 2">Colocalizes with CDK5RAP2, CEP152 and WDR62 in a discrete ring around the proximal end of the parental centriole. At this site, a cohesive structure is predicted to engage parental centrioles and procentrioles (By similarity).</text>
</comment>
<comment type="PTM">
    <text evidence="2">Polyubiquitinated via 'Lys-48'-linked ubiquitin, leading to its degradation. Deubiquitinated by USP36, promoting its stabilization.</text>
</comment>
<comment type="similarity">
    <text evidence="4">Belongs to the CEP63 family.</text>
</comment>
<evidence type="ECO:0000250" key="1">
    <source>
        <dbReference type="UniProtKB" id="Q3UPP8"/>
    </source>
</evidence>
<evidence type="ECO:0000250" key="2">
    <source>
        <dbReference type="UniProtKB" id="Q96MT8"/>
    </source>
</evidence>
<evidence type="ECO:0000255" key="3"/>
<evidence type="ECO:0000305" key="4"/>
<evidence type="ECO:0000312" key="5">
    <source>
        <dbReference type="RGD" id="1561183"/>
    </source>
</evidence>
<sequence>MEALLEGIQTRGHSGGFLTSCEAELQELMKQIDIMVAHKKSEWEGQTHALETCLDMRDRELKALRSQLDMKHKEVGILHQQIEEQEKTKQEMALEYKEELMKLQEELSRLKRSYEKLQKKQLREFRGNTKSLREDRSEIERLTGKIEEFRQKSLDWEKQRLIYQQQVSSLEAQRKALAEQSEIIQAQLANRKQKLESVELSSQSEIQHLSSKLERAKDTICANELEIERLNIRVKDLMGTNVTILQEQRQKEEKLRESEKLLEALQEEQKELKASLQAQESFILDAKMQEKLQTKLKAVDTKHSVERSLEDCQVERKYSSSGQGVLDNVLSQLDISHSSEELLQAEVTRLEGSLESVSTTCKQLSQELMEKYEELKRMEGHNNEYRTEIKKLKEQILQADQTYSSALEGMKTEISQLTRELHQRDITIASAKCSSSDMERQLKAEMQKAEEKAVEHKEILSQLESLRLENRRLSETVMKLELGLHECSMPVSPLGLIATRFLEEEELRSHHILERLDAHIEELKRESEKTVRQFTALV</sequence>
<dbReference type="EMBL" id="CH473954">
    <property type="protein sequence ID" value="EDL77401.1"/>
    <property type="molecule type" value="Genomic_DNA"/>
</dbReference>
<dbReference type="EMBL" id="BC098948">
    <property type="protein sequence ID" value="AAH98948.1"/>
    <property type="molecule type" value="mRNA"/>
</dbReference>
<dbReference type="EMBL" id="BC161815">
    <property type="protein sequence ID" value="AAI61815.1"/>
    <property type="molecule type" value="mRNA"/>
</dbReference>
<dbReference type="RefSeq" id="NP_001032861.2">
    <property type="nucleotide sequence ID" value="NM_001037772.1"/>
</dbReference>
<dbReference type="RefSeq" id="NP_001231734.1">
    <property type="nucleotide sequence ID" value="NM_001244805.1"/>
</dbReference>
<dbReference type="SMR" id="Q4KLY0"/>
<dbReference type="FunCoup" id="Q4KLY0">
    <property type="interactions" value="1826"/>
</dbReference>
<dbReference type="STRING" id="10116.ENSRNOP00000070249"/>
<dbReference type="PhosphoSitePlus" id="Q4KLY0"/>
<dbReference type="PaxDb" id="10116-ENSRNOP00000053371"/>
<dbReference type="GeneID" id="300963"/>
<dbReference type="KEGG" id="rno:300963"/>
<dbReference type="UCSC" id="RGD:1561183">
    <property type="organism name" value="rat"/>
</dbReference>
<dbReference type="AGR" id="RGD:1561183"/>
<dbReference type="CTD" id="80254"/>
<dbReference type="RGD" id="1561183">
    <property type="gene designation" value="Cep63"/>
</dbReference>
<dbReference type="VEuPathDB" id="HostDB:ENSRNOG00000008410"/>
<dbReference type="eggNOG" id="ENOG502QRYU">
    <property type="taxonomic scope" value="Eukaryota"/>
</dbReference>
<dbReference type="HOGENOM" id="CLU_027471_0_0_1"/>
<dbReference type="InParanoid" id="Q4KLY0"/>
<dbReference type="PhylomeDB" id="Q4KLY0"/>
<dbReference type="Reactome" id="R-RNO-2565942">
    <property type="pathway name" value="Regulation of PLK1 Activity at G2/M Transition"/>
</dbReference>
<dbReference type="Reactome" id="R-RNO-380259">
    <property type="pathway name" value="Loss of Nlp from mitotic centrosomes"/>
</dbReference>
<dbReference type="Reactome" id="R-RNO-380270">
    <property type="pathway name" value="Recruitment of mitotic centrosome proteins and complexes"/>
</dbReference>
<dbReference type="Reactome" id="R-RNO-380284">
    <property type="pathway name" value="Loss of proteins required for interphase microtubule organization from the centrosome"/>
</dbReference>
<dbReference type="Reactome" id="R-RNO-380320">
    <property type="pathway name" value="Recruitment of NuMA to mitotic centrosomes"/>
</dbReference>
<dbReference type="Reactome" id="R-RNO-5620912">
    <property type="pathway name" value="Anchoring of the basal body to the plasma membrane"/>
</dbReference>
<dbReference type="Reactome" id="R-RNO-8854518">
    <property type="pathway name" value="AURKA Activation by TPX2"/>
</dbReference>
<dbReference type="PRO" id="PR:Q4KLY0"/>
<dbReference type="Proteomes" id="UP000002494">
    <property type="component" value="Chromosome 8"/>
</dbReference>
<dbReference type="Proteomes" id="UP000234681">
    <property type="component" value="Chromosome 8"/>
</dbReference>
<dbReference type="Bgee" id="ENSRNOG00000008410">
    <property type="expression patterns" value="Expressed in testis and 19 other cell types or tissues"/>
</dbReference>
<dbReference type="ExpressionAtlas" id="Q4KLY0">
    <property type="expression patterns" value="baseline and differential"/>
</dbReference>
<dbReference type="GO" id="GO:0034451">
    <property type="term" value="C:centriolar satellite"/>
    <property type="evidence" value="ECO:0007669"/>
    <property type="project" value="UniProtKB-SubCell"/>
</dbReference>
<dbReference type="GO" id="GO:0005814">
    <property type="term" value="C:centriole"/>
    <property type="evidence" value="ECO:0000250"/>
    <property type="project" value="UniProtKB"/>
</dbReference>
<dbReference type="GO" id="GO:0005813">
    <property type="term" value="C:centrosome"/>
    <property type="evidence" value="ECO:0000250"/>
    <property type="project" value="UniProtKB"/>
</dbReference>
<dbReference type="GO" id="GO:0005737">
    <property type="term" value="C:cytoplasm"/>
    <property type="evidence" value="ECO:0007669"/>
    <property type="project" value="UniProtKB-KW"/>
</dbReference>
<dbReference type="GO" id="GO:0000922">
    <property type="term" value="C:spindle pole"/>
    <property type="evidence" value="ECO:0000250"/>
    <property type="project" value="UniProtKB"/>
</dbReference>
<dbReference type="GO" id="GO:0060090">
    <property type="term" value="F:molecular adaptor activity"/>
    <property type="evidence" value="ECO:0000266"/>
    <property type="project" value="RGD"/>
</dbReference>
<dbReference type="GO" id="GO:0051301">
    <property type="term" value="P:cell division"/>
    <property type="evidence" value="ECO:0007669"/>
    <property type="project" value="UniProtKB-KW"/>
</dbReference>
<dbReference type="GO" id="GO:0007099">
    <property type="term" value="P:centriole replication"/>
    <property type="evidence" value="ECO:0000250"/>
    <property type="project" value="UniProtKB"/>
</dbReference>
<dbReference type="GO" id="GO:0051298">
    <property type="term" value="P:centrosome duplication"/>
    <property type="evidence" value="ECO:0000266"/>
    <property type="project" value="RGD"/>
</dbReference>
<dbReference type="GO" id="GO:0098535">
    <property type="term" value="P:de novo centriole assembly involved in multi-ciliated epithelial cell differentiation"/>
    <property type="evidence" value="ECO:0000318"/>
    <property type="project" value="GO_Central"/>
</dbReference>
<dbReference type="GO" id="GO:0000077">
    <property type="term" value="P:DNA damage checkpoint signaling"/>
    <property type="evidence" value="ECO:0000250"/>
    <property type="project" value="UniProtKB"/>
</dbReference>
<dbReference type="GO" id="GO:0072332">
    <property type="term" value="P:intrinsic apoptotic signaling pathway by p53 class mediator"/>
    <property type="evidence" value="ECO:0000266"/>
    <property type="project" value="RGD"/>
</dbReference>
<dbReference type="GO" id="GO:0045141">
    <property type="term" value="P:meiotic telomere clustering"/>
    <property type="evidence" value="ECO:0000266"/>
    <property type="project" value="RGD"/>
</dbReference>
<dbReference type="GO" id="GO:0045824">
    <property type="term" value="P:negative regulation of innate immune response"/>
    <property type="evidence" value="ECO:0000266"/>
    <property type="project" value="RGD"/>
</dbReference>
<dbReference type="GO" id="GO:1902254">
    <property type="term" value="P:negative regulation of intrinsic apoptotic signaling pathway by p53 class mediator"/>
    <property type="evidence" value="ECO:0000266"/>
    <property type="project" value="RGD"/>
</dbReference>
<dbReference type="GO" id="GO:1900045">
    <property type="term" value="P:negative regulation of protein K63-linked ubiquitination"/>
    <property type="evidence" value="ECO:0000250"/>
    <property type="project" value="UniProtKB"/>
</dbReference>
<dbReference type="GO" id="GO:0071539">
    <property type="term" value="P:protein localization to centrosome"/>
    <property type="evidence" value="ECO:0000266"/>
    <property type="project" value="RGD"/>
</dbReference>
<dbReference type="GO" id="GO:0050821">
    <property type="term" value="P:protein stabilization"/>
    <property type="evidence" value="ECO:0000250"/>
    <property type="project" value="UniProtKB"/>
</dbReference>
<dbReference type="GO" id="GO:0007131">
    <property type="term" value="P:reciprocal meiotic recombination"/>
    <property type="evidence" value="ECO:0000266"/>
    <property type="project" value="RGD"/>
</dbReference>
<dbReference type="GO" id="GO:0042770">
    <property type="term" value="P:signal transduction in response to DNA damage"/>
    <property type="evidence" value="ECO:0000250"/>
    <property type="project" value="UniProtKB"/>
</dbReference>
<dbReference type="GO" id="GO:0051225">
    <property type="term" value="P:spindle assembly"/>
    <property type="evidence" value="ECO:0000250"/>
    <property type="project" value="UniProtKB"/>
</dbReference>
<dbReference type="Gene3D" id="1.20.5.340">
    <property type="match status" value="1"/>
</dbReference>
<dbReference type="InterPro" id="IPR031470">
    <property type="entry name" value="Cep63/Deup1_N"/>
</dbReference>
<dbReference type="PANTHER" id="PTHR18875:SF7">
    <property type="entry name" value="CENTROSOMAL PROTEIN OF 63 KDA"/>
    <property type="match status" value="1"/>
</dbReference>
<dbReference type="PANTHER" id="PTHR18875">
    <property type="entry name" value="SARCOMA ANTIGEN NY-SAR-24/CYTOSKELETAL PROTEIN SOJO"/>
    <property type="match status" value="1"/>
</dbReference>
<dbReference type="Pfam" id="PF17045">
    <property type="entry name" value="CEP63"/>
    <property type="match status" value="1"/>
</dbReference>
<organism>
    <name type="scientific">Rattus norvegicus</name>
    <name type="common">Rat</name>
    <dbReference type="NCBI Taxonomy" id="10116"/>
    <lineage>
        <taxon>Eukaryota</taxon>
        <taxon>Metazoa</taxon>
        <taxon>Chordata</taxon>
        <taxon>Craniata</taxon>
        <taxon>Vertebrata</taxon>
        <taxon>Euteleostomi</taxon>
        <taxon>Mammalia</taxon>
        <taxon>Eutheria</taxon>
        <taxon>Euarchontoglires</taxon>
        <taxon>Glires</taxon>
        <taxon>Rodentia</taxon>
        <taxon>Myomorpha</taxon>
        <taxon>Muroidea</taxon>
        <taxon>Muridae</taxon>
        <taxon>Murinae</taxon>
        <taxon>Rattus</taxon>
    </lineage>
</organism>
<proteinExistence type="evidence at transcript level"/>